<evidence type="ECO:0000255" key="1">
    <source>
        <dbReference type="HAMAP-Rule" id="MF_00503"/>
    </source>
</evidence>
<evidence type="ECO:0000305" key="2"/>
<feature type="chain" id="PRO_1000126935" description="Large ribosomal subunit protein bL9">
    <location>
        <begin position="1"/>
        <end position="150"/>
    </location>
</feature>
<gene>
    <name evidence="1" type="primary">rplI</name>
    <name type="ordered locus">LCK_00173</name>
</gene>
<comment type="function">
    <text evidence="1">Binds to the 23S rRNA.</text>
</comment>
<comment type="similarity">
    <text evidence="1">Belongs to the bacterial ribosomal protein bL9 family.</text>
</comment>
<accession>B1MWV4</accession>
<keyword id="KW-1185">Reference proteome</keyword>
<keyword id="KW-0687">Ribonucleoprotein</keyword>
<keyword id="KW-0689">Ribosomal protein</keyword>
<keyword id="KW-0694">RNA-binding</keyword>
<keyword id="KW-0699">rRNA-binding</keyword>
<proteinExistence type="inferred from homology"/>
<dbReference type="EMBL" id="DQ489736">
    <property type="protein sequence ID" value="ACA82006.1"/>
    <property type="molecule type" value="Genomic_DNA"/>
</dbReference>
<dbReference type="RefSeq" id="WP_012305027.1">
    <property type="nucleotide sequence ID" value="NC_010471.1"/>
</dbReference>
<dbReference type="SMR" id="B1MWV4"/>
<dbReference type="STRING" id="349519.LCK_00173"/>
<dbReference type="KEGG" id="lci:LCK_00173"/>
<dbReference type="eggNOG" id="COG0359">
    <property type="taxonomic scope" value="Bacteria"/>
</dbReference>
<dbReference type="HOGENOM" id="CLU_078938_3_2_9"/>
<dbReference type="OrthoDB" id="9788336at2"/>
<dbReference type="Proteomes" id="UP000002166">
    <property type="component" value="Chromosome"/>
</dbReference>
<dbReference type="GO" id="GO:1990904">
    <property type="term" value="C:ribonucleoprotein complex"/>
    <property type="evidence" value="ECO:0007669"/>
    <property type="project" value="UniProtKB-KW"/>
</dbReference>
<dbReference type="GO" id="GO:0005840">
    <property type="term" value="C:ribosome"/>
    <property type="evidence" value="ECO:0007669"/>
    <property type="project" value="UniProtKB-KW"/>
</dbReference>
<dbReference type="GO" id="GO:0019843">
    <property type="term" value="F:rRNA binding"/>
    <property type="evidence" value="ECO:0007669"/>
    <property type="project" value="UniProtKB-UniRule"/>
</dbReference>
<dbReference type="GO" id="GO:0003735">
    <property type="term" value="F:structural constituent of ribosome"/>
    <property type="evidence" value="ECO:0007669"/>
    <property type="project" value="InterPro"/>
</dbReference>
<dbReference type="GO" id="GO:0006412">
    <property type="term" value="P:translation"/>
    <property type="evidence" value="ECO:0007669"/>
    <property type="project" value="UniProtKB-UniRule"/>
</dbReference>
<dbReference type="FunFam" id="3.40.5.10:FF:000002">
    <property type="entry name" value="50S ribosomal protein L9"/>
    <property type="match status" value="1"/>
</dbReference>
<dbReference type="Gene3D" id="3.10.430.100">
    <property type="entry name" value="Ribosomal protein L9, C-terminal domain"/>
    <property type="match status" value="1"/>
</dbReference>
<dbReference type="Gene3D" id="3.40.5.10">
    <property type="entry name" value="Ribosomal protein L9, N-terminal domain"/>
    <property type="match status" value="1"/>
</dbReference>
<dbReference type="HAMAP" id="MF_00503">
    <property type="entry name" value="Ribosomal_bL9"/>
    <property type="match status" value="1"/>
</dbReference>
<dbReference type="InterPro" id="IPR000244">
    <property type="entry name" value="Ribosomal_bL9"/>
</dbReference>
<dbReference type="InterPro" id="IPR009027">
    <property type="entry name" value="Ribosomal_bL9/RNase_H1_N"/>
</dbReference>
<dbReference type="InterPro" id="IPR020594">
    <property type="entry name" value="Ribosomal_bL9_bac/chp"/>
</dbReference>
<dbReference type="InterPro" id="IPR020069">
    <property type="entry name" value="Ribosomal_bL9_C"/>
</dbReference>
<dbReference type="InterPro" id="IPR036791">
    <property type="entry name" value="Ribosomal_bL9_C_sf"/>
</dbReference>
<dbReference type="InterPro" id="IPR020070">
    <property type="entry name" value="Ribosomal_bL9_N"/>
</dbReference>
<dbReference type="InterPro" id="IPR036935">
    <property type="entry name" value="Ribosomal_bL9_N_sf"/>
</dbReference>
<dbReference type="NCBIfam" id="TIGR00158">
    <property type="entry name" value="L9"/>
    <property type="match status" value="1"/>
</dbReference>
<dbReference type="PANTHER" id="PTHR21368">
    <property type="entry name" value="50S RIBOSOMAL PROTEIN L9"/>
    <property type="match status" value="1"/>
</dbReference>
<dbReference type="Pfam" id="PF03948">
    <property type="entry name" value="Ribosomal_L9_C"/>
    <property type="match status" value="1"/>
</dbReference>
<dbReference type="Pfam" id="PF01281">
    <property type="entry name" value="Ribosomal_L9_N"/>
    <property type="match status" value="1"/>
</dbReference>
<dbReference type="SUPFAM" id="SSF55658">
    <property type="entry name" value="L9 N-domain-like"/>
    <property type="match status" value="1"/>
</dbReference>
<dbReference type="SUPFAM" id="SSF55653">
    <property type="entry name" value="Ribosomal protein L9 C-domain"/>
    <property type="match status" value="1"/>
</dbReference>
<dbReference type="PROSITE" id="PS00651">
    <property type="entry name" value="RIBOSOMAL_L9"/>
    <property type="match status" value="1"/>
</dbReference>
<reference key="1">
    <citation type="journal article" date="2008" name="J. Bacteriol.">
        <title>Complete genome sequence of Leuconostoc citreum KM20.</title>
        <authorList>
            <person name="Kim J.F."/>
            <person name="Jeong H."/>
            <person name="Lee J.-S."/>
            <person name="Choi S.-H."/>
            <person name="Ha M."/>
            <person name="Hur C.-G."/>
            <person name="Kim J.-S."/>
            <person name="Lee S."/>
            <person name="Park H.-S."/>
            <person name="Park Y.-H."/>
            <person name="Oh T.K."/>
        </authorList>
    </citation>
    <scope>NUCLEOTIDE SEQUENCE [LARGE SCALE GENOMIC DNA]</scope>
    <source>
        <strain>KM20</strain>
    </source>
</reference>
<sequence>MKVVFLEDVKGRGKKGEIKEVPDGYANNFLIKNKKAEPATGKNLGAVKGRQKAEEKAAAEALAEAEQLKAKMADEKFVVEVKGKSGADGRLFGAISTKQIVVALAAQKQIKLDKRKLLLNQPIHALGYTNVPVKLHRDVVANLRVHVSEG</sequence>
<name>RL9_LEUCK</name>
<protein>
    <recommendedName>
        <fullName evidence="1">Large ribosomal subunit protein bL9</fullName>
    </recommendedName>
    <alternativeName>
        <fullName evidence="2">50S ribosomal protein L9</fullName>
    </alternativeName>
</protein>
<organism>
    <name type="scientific">Leuconostoc citreum (strain KM20)</name>
    <dbReference type="NCBI Taxonomy" id="349519"/>
    <lineage>
        <taxon>Bacteria</taxon>
        <taxon>Bacillati</taxon>
        <taxon>Bacillota</taxon>
        <taxon>Bacilli</taxon>
        <taxon>Lactobacillales</taxon>
        <taxon>Lactobacillaceae</taxon>
        <taxon>Leuconostoc</taxon>
    </lineage>
</organism>